<feature type="chain" id="PRO_1000166262" description="Ribulose bisphosphate carboxylase large chain">
    <location>
        <begin position="1"/>
        <end position="486"/>
    </location>
</feature>
<feature type="active site" description="Proton acceptor" evidence="1">
    <location>
        <position position="177"/>
    </location>
</feature>
<feature type="active site" description="Proton acceptor" evidence="1">
    <location>
        <position position="295"/>
    </location>
</feature>
<feature type="binding site" description="in homodimeric partner" evidence="1">
    <location>
        <position position="125"/>
    </location>
    <ligand>
        <name>substrate</name>
    </ligand>
</feature>
<feature type="binding site" evidence="1">
    <location>
        <position position="175"/>
    </location>
    <ligand>
        <name>substrate</name>
    </ligand>
</feature>
<feature type="binding site" evidence="1">
    <location>
        <position position="179"/>
    </location>
    <ligand>
        <name>substrate</name>
    </ligand>
</feature>
<feature type="binding site" description="via carbamate group" evidence="1">
    <location>
        <position position="203"/>
    </location>
    <ligand>
        <name>Mg(2+)</name>
        <dbReference type="ChEBI" id="CHEBI:18420"/>
    </ligand>
</feature>
<feature type="binding site" evidence="1">
    <location>
        <position position="205"/>
    </location>
    <ligand>
        <name>Mg(2+)</name>
        <dbReference type="ChEBI" id="CHEBI:18420"/>
    </ligand>
</feature>
<feature type="binding site" evidence="1">
    <location>
        <position position="206"/>
    </location>
    <ligand>
        <name>Mg(2+)</name>
        <dbReference type="ChEBI" id="CHEBI:18420"/>
    </ligand>
</feature>
<feature type="binding site" evidence="1">
    <location>
        <position position="296"/>
    </location>
    <ligand>
        <name>substrate</name>
    </ligand>
</feature>
<feature type="binding site" evidence="1">
    <location>
        <position position="328"/>
    </location>
    <ligand>
        <name>substrate</name>
    </ligand>
</feature>
<feature type="binding site" evidence="1">
    <location>
        <position position="380"/>
    </location>
    <ligand>
        <name>substrate</name>
    </ligand>
</feature>
<feature type="site" description="Transition state stabilizer" evidence="1">
    <location>
        <position position="335"/>
    </location>
</feature>
<feature type="modified residue" description="N6-carboxylysine" evidence="1">
    <location>
        <position position="203"/>
    </location>
</feature>
<gene>
    <name evidence="1" type="primary">cbbL</name>
    <name type="ordered locus">RSKD131_2681</name>
</gene>
<reference key="1">
    <citation type="journal article" date="2009" name="J. Bacteriol.">
        <title>Complete genome sequence of Rhodobacter sphaeroides KD131.</title>
        <authorList>
            <person name="Lim S.-K."/>
            <person name="Kim S.J."/>
            <person name="Cha S.H."/>
            <person name="Oh Y.-K."/>
            <person name="Rhee H.-J."/>
            <person name="Kim M.-S."/>
            <person name="Lee J.K."/>
        </authorList>
    </citation>
    <scope>NUCLEOTIDE SEQUENCE [LARGE SCALE GENOMIC DNA]</scope>
    <source>
        <strain>KD131 / KCTC 12085</strain>
    </source>
</reference>
<accession>B9KQ06</accession>
<proteinExistence type="inferred from homology"/>
<protein>
    <recommendedName>
        <fullName evidence="1">Ribulose bisphosphate carboxylase large chain</fullName>
        <shortName evidence="1">RuBisCO large subunit</shortName>
        <ecNumber evidence="1">4.1.1.39</ecNumber>
    </recommendedName>
</protein>
<organism>
    <name type="scientific">Cereibacter sphaeroides (strain KD131 / KCTC 12085)</name>
    <name type="common">Rhodobacter sphaeroides</name>
    <dbReference type="NCBI Taxonomy" id="557760"/>
    <lineage>
        <taxon>Bacteria</taxon>
        <taxon>Pseudomonadati</taxon>
        <taxon>Pseudomonadota</taxon>
        <taxon>Alphaproteobacteria</taxon>
        <taxon>Rhodobacterales</taxon>
        <taxon>Paracoccaceae</taxon>
        <taxon>Cereibacter</taxon>
    </lineage>
</organism>
<evidence type="ECO:0000255" key="1">
    <source>
        <dbReference type="HAMAP-Rule" id="MF_01338"/>
    </source>
</evidence>
<sequence length="486" mass="53686">MDTKTTEIKGKERYKAGVLKYAQMGYWDGDYVPKDTDVLALFRITPQEGVDPVEAAAAVAGESSTATWTVVWTDRLTACDSYRAKAYRVEPVPGTPGQYFCYVAYDLILFEEGSIANLTASIIGNVFSFKPLKAARLEDMRFPVAYVKTYKGPPTGIVGERERLDKFGKPLLGATTKPKLGLSGKNYGRVVYEGLKGGLDFMKDDENINSQPFMHWRDRFLYVMEAVNLASAQTGEVKGHYLNITAGTMEEMYRRAEFAKSLGSVIVMVDLIIGYTAIQSISEWCRQNDMILHMHRAGHGTYTRQKNHGISFRVIAKWLRLAGVDHLHCGTAVGKLEGDPLTVQGYYNVCREPFNTVDLPRGIFFEQDWADLRKVMPVASGGIHAGQMHQLLSLFGDDVVLQFGGGTIGHPMGIQAGATANRVALEAMVLARNEGRNIDVEGPEILRAAAKWCKPLEAALDTWGNITFNYTSTDTSDFVPTASVAM</sequence>
<keyword id="KW-0113">Calvin cycle</keyword>
<keyword id="KW-0120">Carbon dioxide fixation</keyword>
<keyword id="KW-0456">Lyase</keyword>
<keyword id="KW-0460">Magnesium</keyword>
<keyword id="KW-0479">Metal-binding</keyword>
<keyword id="KW-0503">Monooxygenase</keyword>
<keyword id="KW-0560">Oxidoreductase</keyword>
<keyword id="KW-0602">Photosynthesis</keyword>
<dbReference type="EC" id="4.1.1.39" evidence="1"/>
<dbReference type="EMBL" id="CP001150">
    <property type="protein sequence ID" value="ACM02541.1"/>
    <property type="molecule type" value="Genomic_DNA"/>
</dbReference>
<dbReference type="RefSeq" id="WP_002721829.1">
    <property type="nucleotide sequence ID" value="NC_011963.1"/>
</dbReference>
<dbReference type="SMR" id="B9KQ06"/>
<dbReference type="GeneID" id="67448053"/>
<dbReference type="KEGG" id="rsk:RSKD131_2681"/>
<dbReference type="HOGENOM" id="CLU_031450_2_0_5"/>
<dbReference type="GO" id="GO:0000287">
    <property type="term" value="F:magnesium ion binding"/>
    <property type="evidence" value="ECO:0007669"/>
    <property type="project" value="UniProtKB-UniRule"/>
</dbReference>
<dbReference type="GO" id="GO:0004497">
    <property type="term" value="F:monooxygenase activity"/>
    <property type="evidence" value="ECO:0007669"/>
    <property type="project" value="UniProtKB-KW"/>
</dbReference>
<dbReference type="GO" id="GO:0016984">
    <property type="term" value="F:ribulose-bisphosphate carboxylase activity"/>
    <property type="evidence" value="ECO:0007669"/>
    <property type="project" value="UniProtKB-UniRule"/>
</dbReference>
<dbReference type="GO" id="GO:0019253">
    <property type="term" value="P:reductive pentose-phosphate cycle"/>
    <property type="evidence" value="ECO:0007669"/>
    <property type="project" value="UniProtKB-UniRule"/>
</dbReference>
<dbReference type="CDD" id="cd08212">
    <property type="entry name" value="RuBisCO_large_I"/>
    <property type="match status" value="1"/>
</dbReference>
<dbReference type="Gene3D" id="3.20.20.110">
    <property type="entry name" value="Ribulose bisphosphate carboxylase, large subunit, C-terminal domain"/>
    <property type="match status" value="1"/>
</dbReference>
<dbReference type="Gene3D" id="3.30.70.150">
    <property type="entry name" value="RuBisCO large subunit, N-terminal domain"/>
    <property type="match status" value="1"/>
</dbReference>
<dbReference type="HAMAP" id="MF_01338">
    <property type="entry name" value="RuBisCO_L_type1"/>
    <property type="match status" value="1"/>
</dbReference>
<dbReference type="InterPro" id="IPR033966">
    <property type="entry name" value="RuBisCO"/>
</dbReference>
<dbReference type="InterPro" id="IPR020878">
    <property type="entry name" value="RuBisCo_large_chain_AS"/>
</dbReference>
<dbReference type="InterPro" id="IPR000685">
    <property type="entry name" value="RuBisCO_lsu_C"/>
</dbReference>
<dbReference type="InterPro" id="IPR036376">
    <property type="entry name" value="RuBisCO_lsu_C_sf"/>
</dbReference>
<dbReference type="InterPro" id="IPR017443">
    <property type="entry name" value="RuBisCO_lsu_fd_N"/>
</dbReference>
<dbReference type="InterPro" id="IPR036422">
    <property type="entry name" value="RuBisCO_lsu_N_sf"/>
</dbReference>
<dbReference type="InterPro" id="IPR020888">
    <property type="entry name" value="RuBisCO_lsuI"/>
</dbReference>
<dbReference type="NCBIfam" id="NF003252">
    <property type="entry name" value="PRK04208.1"/>
    <property type="match status" value="1"/>
</dbReference>
<dbReference type="PANTHER" id="PTHR42704">
    <property type="entry name" value="RIBULOSE BISPHOSPHATE CARBOXYLASE"/>
    <property type="match status" value="1"/>
</dbReference>
<dbReference type="PANTHER" id="PTHR42704:SF17">
    <property type="entry name" value="RIBULOSE BISPHOSPHATE CARBOXYLASE LARGE CHAIN"/>
    <property type="match status" value="1"/>
</dbReference>
<dbReference type="Pfam" id="PF00016">
    <property type="entry name" value="RuBisCO_large"/>
    <property type="match status" value="1"/>
</dbReference>
<dbReference type="Pfam" id="PF02788">
    <property type="entry name" value="RuBisCO_large_N"/>
    <property type="match status" value="1"/>
</dbReference>
<dbReference type="SFLD" id="SFLDG01052">
    <property type="entry name" value="RuBisCO"/>
    <property type="match status" value="1"/>
</dbReference>
<dbReference type="SFLD" id="SFLDS00014">
    <property type="entry name" value="RuBisCO"/>
    <property type="match status" value="1"/>
</dbReference>
<dbReference type="SFLD" id="SFLDG00301">
    <property type="entry name" value="RuBisCO-like_proteins"/>
    <property type="match status" value="1"/>
</dbReference>
<dbReference type="SUPFAM" id="SSF51649">
    <property type="entry name" value="RuBisCo, C-terminal domain"/>
    <property type="match status" value="1"/>
</dbReference>
<dbReference type="SUPFAM" id="SSF54966">
    <property type="entry name" value="RuBisCO, large subunit, small (N-terminal) domain"/>
    <property type="match status" value="1"/>
</dbReference>
<dbReference type="PROSITE" id="PS00157">
    <property type="entry name" value="RUBISCO_LARGE"/>
    <property type="match status" value="1"/>
</dbReference>
<comment type="function">
    <text evidence="1">RuBisCO catalyzes two reactions: the carboxylation of D-ribulose 1,5-bisphosphate, the primary event in carbon dioxide fixation, as well as the oxidative fragmentation of the pentose substrate. Both reactions occur simultaneously and in competition at the same active site.</text>
</comment>
<comment type="catalytic activity">
    <reaction evidence="1">
        <text>2 (2R)-3-phosphoglycerate + 2 H(+) = D-ribulose 1,5-bisphosphate + CO2 + H2O</text>
        <dbReference type="Rhea" id="RHEA:23124"/>
        <dbReference type="ChEBI" id="CHEBI:15377"/>
        <dbReference type="ChEBI" id="CHEBI:15378"/>
        <dbReference type="ChEBI" id="CHEBI:16526"/>
        <dbReference type="ChEBI" id="CHEBI:57870"/>
        <dbReference type="ChEBI" id="CHEBI:58272"/>
        <dbReference type="EC" id="4.1.1.39"/>
    </reaction>
</comment>
<comment type="catalytic activity">
    <reaction evidence="1">
        <text>D-ribulose 1,5-bisphosphate + O2 = 2-phosphoglycolate + (2R)-3-phosphoglycerate + 2 H(+)</text>
        <dbReference type="Rhea" id="RHEA:36631"/>
        <dbReference type="ChEBI" id="CHEBI:15378"/>
        <dbReference type="ChEBI" id="CHEBI:15379"/>
        <dbReference type="ChEBI" id="CHEBI:57870"/>
        <dbReference type="ChEBI" id="CHEBI:58033"/>
        <dbReference type="ChEBI" id="CHEBI:58272"/>
    </reaction>
</comment>
<comment type="cofactor">
    <cofactor evidence="1">
        <name>Mg(2+)</name>
        <dbReference type="ChEBI" id="CHEBI:18420"/>
    </cofactor>
    <text evidence="1">Binds 1 Mg(2+) ion per subunit.</text>
</comment>
<comment type="subunit">
    <text evidence="1">Heterohexadecamer of 8 large chains and 8 small chains.</text>
</comment>
<comment type="miscellaneous">
    <text evidence="1">The basic functional RuBisCO is composed of a large chain homodimer in a 'head-to-tail' conformation. In form I RuBisCO this homodimer is arranged in a barrel-like tetramer with the small subunits forming a tetrameric 'cap' on each end of the 'barrel'.</text>
</comment>
<comment type="similarity">
    <text evidence="1">Belongs to the RuBisCO large chain family. Type I subfamily.</text>
</comment>
<name>RBL_CERSK</name>